<sequence length="94" mass="10230">MNDRKRAVQARVYGRVQGVGYRIWTRSEAAGLGLVGWVRNERDGSVTAWLAGADAAVSAMIERLRQGPAGASVSRVEVEEIETWTAPGDFRIVA</sequence>
<protein>
    <recommendedName>
        <fullName>Acylphosphatase</fullName>
        <ecNumber>3.6.1.7</ecNumber>
    </recommendedName>
    <alternativeName>
        <fullName>Acylphosphate phosphohydrolase</fullName>
    </alternativeName>
</protein>
<comment type="catalytic activity">
    <reaction>
        <text>an acyl phosphate + H2O = a carboxylate + phosphate + H(+)</text>
        <dbReference type="Rhea" id="RHEA:14965"/>
        <dbReference type="ChEBI" id="CHEBI:15377"/>
        <dbReference type="ChEBI" id="CHEBI:15378"/>
        <dbReference type="ChEBI" id="CHEBI:29067"/>
        <dbReference type="ChEBI" id="CHEBI:43474"/>
        <dbReference type="ChEBI" id="CHEBI:59918"/>
        <dbReference type="EC" id="3.6.1.7"/>
    </reaction>
</comment>
<comment type="similarity">
    <text evidence="2">Belongs to the acylphosphatase family.</text>
</comment>
<proteinExistence type="inferred from homology"/>
<keyword id="KW-0378">Hydrolase</keyword>
<accession>Q985C8</accession>
<dbReference type="EC" id="3.6.1.7"/>
<dbReference type="EMBL" id="BA000012">
    <property type="protein sequence ID" value="BAB54134.1"/>
    <property type="molecule type" value="Genomic_DNA"/>
</dbReference>
<dbReference type="RefSeq" id="WP_010915082.1">
    <property type="nucleotide sequence ID" value="NC_002678.2"/>
</dbReference>
<dbReference type="SMR" id="Q985C8"/>
<dbReference type="KEGG" id="mlo:mll7735"/>
<dbReference type="PATRIC" id="fig|266835.9.peg.6192"/>
<dbReference type="eggNOG" id="COG1254">
    <property type="taxonomic scope" value="Bacteria"/>
</dbReference>
<dbReference type="HOGENOM" id="CLU_141932_3_2_5"/>
<dbReference type="Proteomes" id="UP000000552">
    <property type="component" value="Chromosome"/>
</dbReference>
<dbReference type="GO" id="GO:0003998">
    <property type="term" value="F:acylphosphatase activity"/>
    <property type="evidence" value="ECO:0007669"/>
    <property type="project" value="UniProtKB-EC"/>
</dbReference>
<dbReference type="Gene3D" id="3.30.70.100">
    <property type="match status" value="1"/>
</dbReference>
<dbReference type="InterPro" id="IPR020456">
    <property type="entry name" value="Acylphosphatase"/>
</dbReference>
<dbReference type="InterPro" id="IPR001792">
    <property type="entry name" value="Acylphosphatase-like_dom"/>
</dbReference>
<dbReference type="InterPro" id="IPR036046">
    <property type="entry name" value="Acylphosphatase-like_dom_sf"/>
</dbReference>
<dbReference type="InterPro" id="IPR017968">
    <property type="entry name" value="Acylphosphatase_CS"/>
</dbReference>
<dbReference type="NCBIfam" id="NF010999">
    <property type="entry name" value="PRK14425.1"/>
    <property type="match status" value="1"/>
</dbReference>
<dbReference type="PANTHER" id="PTHR47268">
    <property type="entry name" value="ACYLPHOSPHATASE"/>
    <property type="match status" value="1"/>
</dbReference>
<dbReference type="PANTHER" id="PTHR47268:SF4">
    <property type="entry name" value="ACYLPHOSPHATASE"/>
    <property type="match status" value="1"/>
</dbReference>
<dbReference type="Pfam" id="PF00708">
    <property type="entry name" value="Acylphosphatase"/>
    <property type="match status" value="1"/>
</dbReference>
<dbReference type="PRINTS" id="PR00112">
    <property type="entry name" value="ACYLPHPHTASE"/>
</dbReference>
<dbReference type="SUPFAM" id="SSF54975">
    <property type="entry name" value="Acylphosphatase/BLUF domain-like"/>
    <property type="match status" value="1"/>
</dbReference>
<dbReference type="PROSITE" id="PS00151">
    <property type="entry name" value="ACYLPHOSPHATASE_2"/>
    <property type="match status" value="1"/>
</dbReference>
<dbReference type="PROSITE" id="PS51160">
    <property type="entry name" value="ACYLPHOSPHATASE_3"/>
    <property type="match status" value="1"/>
</dbReference>
<reference key="1">
    <citation type="journal article" date="2000" name="DNA Res.">
        <title>Complete genome structure of the nitrogen-fixing symbiotic bacterium Mesorhizobium loti.</title>
        <authorList>
            <person name="Kaneko T."/>
            <person name="Nakamura Y."/>
            <person name="Sato S."/>
            <person name="Asamizu E."/>
            <person name="Kato T."/>
            <person name="Sasamoto S."/>
            <person name="Watanabe A."/>
            <person name="Idesawa K."/>
            <person name="Ishikawa A."/>
            <person name="Kawashima K."/>
            <person name="Kimura T."/>
            <person name="Kishida Y."/>
            <person name="Kiyokawa C."/>
            <person name="Kohara M."/>
            <person name="Matsumoto M."/>
            <person name="Matsuno A."/>
            <person name="Mochizuki Y."/>
            <person name="Nakayama S."/>
            <person name="Nakazaki N."/>
            <person name="Shimpo S."/>
            <person name="Sugimoto M."/>
            <person name="Takeuchi C."/>
            <person name="Yamada M."/>
            <person name="Tabata S."/>
        </authorList>
    </citation>
    <scope>NUCLEOTIDE SEQUENCE [LARGE SCALE GENOMIC DNA]</scope>
    <source>
        <strain>LMG 29417 / CECT 9101 / MAFF 303099</strain>
    </source>
</reference>
<feature type="chain" id="PRO_0000326781" description="Acylphosphatase">
    <location>
        <begin position="1"/>
        <end position="94"/>
    </location>
</feature>
<feature type="domain" description="Acylphosphatase-like" evidence="1">
    <location>
        <begin position="7"/>
        <end position="94"/>
    </location>
</feature>
<feature type="active site" evidence="1">
    <location>
        <position position="22"/>
    </location>
</feature>
<feature type="active site" evidence="1">
    <location>
        <position position="40"/>
    </location>
</feature>
<organism>
    <name type="scientific">Mesorhizobium japonicum (strain LMG 29417 / CECT 9101 / MAFF 303099)</name>
    <name type="common">Mesorhizobium loti (strain MAFF 303099)</name>
    <dbReference type="NCBI Taxonomy" id="266835"/>
    <lineage>
        <taxon>Bacteria</taxon>
        <taxon>Pseudomonadati</taxon>
        <taxon>Pseudomonadota</taxon>
        <taxon>Alphaproteobacteria</taxon>
        <taxon>Hyphomicrobiales</taxon>
        <taxon>Phyllobacteriaceae</taxon>
        <taxon>Mesorhizobium</taxon>
    </lineage>
</organism>
<gene>
    <name type="primary">acyP</name>
    <name type="ordered locus">mll7735</name>
</gene>
<name>ACYP_RHILO</name>
<evidence type="ECO:0000255" key="1">
    <source>
        <dbReference type="PROSITE-ProRule" id="PRU00520"/>
    </source>
</evidence>
<evidence type="ECO:0000305" key="2"/>